<name>DABA1_BRASO</name>
<comment type="function">
    <text evidence="1">Part of an energy-coupled inorganic carbon pump.</text>
</comment>
<comment type="cofactor">
    <cofactor evidence="1">
        <name>Zn(2+)</name>
        <dbReference type="ChEBI" id="CHEBI:29105"/>
    </cofactor>
</comment>
<comment type="subunit">
    <text evidence="1">Forms a complex with DabB.</text>
</comment>
<comment type="subcellular location">
    <subcellularLocation>
        <location evidence="1">Cell inner membrane</location>
        <topology evidence="1">Peripheral membrane protein</topology>
    </subcellularLocation>
</comment>
<comment type="similarity">
    <text evidence="1">Belongs to the inorganic carbon transporter (TC 9.A.2) DabA family.</text>
</comment>
<accession>A4YQE4</accession>
<evidence type="ECO:0000255" key="1">
    <source>
        <dbReference type="HAMAP-Rule" id="MF_01871"/>
    </source>
</evidence>
<sequence length="841" mass="92170">MIECDAPAVALAPTPALHAAIAGACRRIAPLWPLKNFVAVNPFMGFSGQSFHATCATLHRVARLETLMPRAFYREAIRSGTIERADLAAALAAAPADWCLPTEVGELLKLADNDKTVRKHPAVVATVAEVLTELAAGDRHVARTAFMTDEISRWCAAYFDEGQSVWRMPARGLRPYAAWRASVRYDRNPEAMGIARFRELVAELPEDYVAAIATVVDRLGVPARAIEDYLHQALLEIGGWAAYARYLMWDHELAGDRDDTLEQLLAIRVVWGYALFVQRTDAEFREAWRRAMEQAALPPLDDKLGGDPDLCINMVLQEAYEIAFRRRLLHRLGQSPAAQASGARPAVQAAFCIDVRSEVYRRAMESISSAVETIGFAGFFGFPIEFVPIGHITGRAHCPVLLRPQFTVCEAVDGTSEDEDSEILVMRLLRRRVRKAWKSFKLSAVSSFIYVETAGLLFAGKILSDSLAVTRTVHDPNTDGLDDAVIGRLGPRISPRLVGGRATGFDQAQRVAMAEAVLRAMSMTGPFARLVMLTGHGSTSVNNPHAAGLDCGACGGNTGEANARVAAAILNDSDVRAGLRDRGIDIPEDTFFLGCLHDTTTDEIKLYDLERLPASHREDLRVLRELLAKATSLTRLERATLLGVAGRADAEQRVVTRSRDWAQVRPEWGLAGNASFIAAPRARTRGIDLGGRAFLHEYDWRQDKDFATLQLIMTAPMVVASWINLQYYGSTVNNAAFGAGNKVLHNVAGTIGVLEGNAGDLKVGLPWQSVHDGTRFVHEPLRLAVLIEAPLEAIGRVIAQNSGVRELVDNAWLHLYAISGQGRVSHRYRSGLQWQAIDPQS</sequence>
<dbReference type="EMBL" id="CU234118">
    <property type="protein sequence ID" value="CAL76120.1"/>
    <property type="molecule type" value="Genomic_DNA"/>
</dbReference>
<dbReference type="STRING" id="114615.BRADO2285"/>
<dbReference type="KEGG" id="bra:BRADO2285"/>
<dbReference type="eggNOG" id="COG3002">
    <property type="taxonomic scope" value="Bacteria"/>
</dbReference>
<dbReference type="HOGENOM" id="CLU_009885_1_0_5"/>
<dbReference type="OrthoDB" id="9805101at2"/>
<dbReference type="Proteomes" id="UP000001994">
    <property type="component" value="Chromosome"/>
</dbReference>
<dbReference type="GO" id="GO:0005886">
    <property type="term" value="C:plasma membrane"/>
    <property type="evidence" value="ECO:0007669"/>
    <property type="project" value="UniProtKB-SubCell"/>
</dbReference>
<dbReference type="GO" id="GO:0008270">
    <property type="term" value="F:zinc ion binding"/>
    <property type="evidence" value="ECO:0007669"/>
    <property type="project" value="UniProtKB-UniRule"/>
</dbReference>
<dbReference type="HAMAP" id="MF_01871">
    <property type="entry name" value="DabA"/>
    <property type="match status" value="1"/>
</dbReference>
<dbReference type="InterPro" id="IPR018752">
    <property type="entry name" value="DabA"/>
</dbReference>
<dbReference type="PANTHER" id="PTHR38344:SF1">
    <property type="entry name" value="INORGANIC CARBON TRANSPORTER SUBUNIT DABA-RELATED"/>
    <property type="match status" value="1"/>
</dbReference>
<dbReference type="PANTHER" id="PTHR38344">
    <property type="entry name" value="UPF0753 PROTEIN AQ_863"/>
    <property type="match status" value="1"/>
</dbReference>
<dbReference type="Pfam" id="PF10070">
    <property type="entry name" value="DabA"/>
    <property type="match status" value="1"/>
</dbReference>
<feature type="chain" id="PRO_0000387253" description="Probable inorganic carbon transporter subunit DabA 1">
    <location>
        <begin position="1"/>
        <end position="841"/>
    </location>
</feature>
<feature type="binding site" evidence="1">
    <location>
        <position position="352"/>
    </location>
    <ligand>
        <name>Zn(2+)</name>
        <dbReference type="ChEBI" id="CHEBI:29105"/>
    </ligand>
</feature>
<feature type="binding site" evidence="1">
    <location>
        <position position="354"/>
    </location>
    <ligand>
        <name>Zn(2+)</name>
        <dbReference type="ChEBI" id="CHEBI:29105"/>
    </ligand>
</feature>
<feature type="binding site" evidence="1">
    <location>
        <position position="536"/>
    </location>
    <ligand>
        <name>Zn(2+)</name>
        <dbReference type="ChEBI" id="CHEBI:29105"/>
    </ligand>
</feature>
<feature type="binding site" evidence="1">
    <location>
        <position position="551"/>
    </location>
    <ligand>
        <name>Zn(2+)</name>
        <dbReference type="ChEBI" id="CHEBI:29105"/>
    </ligand>
</feature>
<keyword id="KW-0997">Cell inner membrane</keyword>
<keyword id="KW-1003">Cell membrane</keyword>
<keyword id="KW-0472">Membrane</keyword>
<keyword id="KW-0479">Metal-binding</keyword>
<keyword id="KW-1185">Reference proteome</keyword>
<keyword id="KW-0813">Transport</keyword>
<keyword id="KW-0862">Zinc</keyword>
<organism>
    <name type="scientific">Bradyrhizobium sp. (strain ORS 278)</name>
    <dbReference type="NCBI Taxonomy" id="114615"/>
    <lineage>
        <taxon>Bacteria</taxon>
        <taxon>Pseudomonadati</taxon>
        <taxon>Pseudomonadota</taxon>
        <taxon>Alphaproteobacteria</taxon>
        <taxon>Hyphomicrobiales</taxon>
        <taxon>Nitrobacteraceae</taxon>
        <taxon>Bradyrhizobium</taxon>
    </lineage>
</organism>
<protein>
    <recommendedName>
        <fullName evidence="1">Probable inorganic carbon transporter subunit DabA 1</fullName>
    </recommendedName>
</protein>
<reference key="1">
    <citation type="journal article" date="2007" name="Science">
        <title>Legumes symbioses: absence of nod genes in photosynthetic bradyrhizobia.</title>
        <authorList>
            <person name="Giraud E."/>
            <person name="Moulin L."/>
            <person name="Vallenet D."/>
            <person name="Barbe V."/>
            <person name="Cytryn E."/>
            <person name="Avarre J.-C."/>
            <person name="Jaubert M."/>
            <person name="Simon D."/>
            <person name="Cartieaux F."/>
            <person name="Prin Y."/>
            <person name="Bena G."/>
            <person name="Hannibal L."/>
            <person name="Fardoux J."/>
            <person name="Kojadinovic M."/>
            <person name="Vuillet L."/>
            <person name="Lajus A."/>
            <person name="Cruveiller S."/>
            <person name="Rouy Z."/>
            <person name="Mangenot S."/>
            <person name="Segurens B."/>
            <person name="Dossat C."/>
            <person name="Franck W.L."/>
            <person name="Chang W.-S."/>
            <person name="Saunders E."/>
            <person name="Bruce D."/>
            <person name="Richardson P."/>
            <person name="Normand P."/>
            <person name="Dreyfus B."/>
            <person name="Pignol D."/>
            <person name="Stacey G."/>
            <person name="Emerich D."/>
            <person name="Vermeglio A."/>
            <person name="Medigue C."/>
            <person name="Sadowsky M."/>
        </authorList>
    </citation>
    <scope>NUCLEOTIDE SEQUENCE [LARGE SCALE GENOMIC DNA]</scope>
    <source>
        <strain>ORS 278</strain>
    </source>
</reference>
<proteinExistence type="inferred from homology"/>
<gene>
    <name evidence="1" type="primary">dabA1</name>
    <name type="ordered locus">BRADO2285</name>
</gene>